<accession>Q21IN0</accession>
<gene>
    <name evidence="1" type="primary">fliE</name>
    <name type="ordered locus">Sde_2189</name>
</gene>
<organism>
    <name type="scientific">Saccharophagus degradans (strain 2-40 / ATCC 43961 / DSM 17024)</name>
    <dbReference type="NCBI Taxonomy" id="203122"/>
    <lineage>
        <taxon>Bacteria</taxon>
        <taxon>Pseudomonadati</taxon>
        <taxon>Pseudomonadota</taxon>
        <taxon>Gammaproteobacteria</taxon>
        <taxon>Cellvibrionales</taxon>
        <taxon>Cellvibrionaceae</taxon>
        <taxon>Saccharophagus</taxon>
    </lineage>
</organism>
<dbReference type="EMBL" id="CP000282">
    <property type="protein sequence ID" value="ABD81449.1"/>
    <property type="molecule type" value="Genomic_DNA"/>
</dbReference>
<dbReference type="RefSeq" id="WP_011468667.1">
    <property type="nucleotide sequence ID" value="NC_007912.1"/>
</dbReference>
<dbReference type="SMR" id="Q21IN0"/>
<dbReference type="STRING" id="203122.Sde_2189"/>
<dbReference type="GeneID" id="98613859"/>
<dbReference type="KEGG" id="sde:Sde_2189"/>
<dbReference type="eggNOG" id="COG1677">
    <property type="taxonomic scope" value="Bacteria"/>
</dbReference>
<dbReference type="HOGENOM" id="CLU_147249_0_0_6"/>
<dbReference type="OrthoDB" id="8909229at2"/>
<dbReference type="Proteomes" id="UP000001947">
    <property type="component" value="Chromosome"/>
</dbReference>
<dbReference type="GO" id="GO:0009425">
    <property type="term" value="C:bacterial-type flagellum basal body"/>
    <property type="evidence" value="ECO:0007669"/>
    <property type="project" value="UniProtKB-SubCell"/>
</dbReference>
<dbReference type="GO" id="GO:0003774">
    <property type="term" value="F:cytoskeletal motor activity"/>
    <property type="evidence" value="ECO:0007669"/>
    <property type="project" value="InterPro"/>
</dbReference>
<dbReference type="GO" id="GO:0005198">
    <property type="term" value="F:structural molecule activity"/>
    <property type="evidence" value="ECO:0007669"/>
    <property type="project" value="InterPro"/>
</dbReference>
<dbReference type="GO" id="GO:0071973">
    <property type="term" value="P:bacterial-type flagellum-dependent cell motility"/>
    <property type="evidence" value="ECO:0007669"/>
    <property type="project" value="InterPro"/>
</dbReference>
<dbReference type="HAMAP" id="MF_00724">
    <property type="entry name" value="FliE"/>
    <property type="match status" value="1"/>
</dbReference>
<dbReference type="InterPro" id="IPR001624">
    <property type="entry name" value="FliE"/>
</dbReference>
<dbReference type="NCBIfam" id="TIGR00205">
    <property type="entry name" value="fliE"/>
    <property type="match status" value="1"/>
</dbReference>
<dbReference type="PANTHER" id="PTHR34653">
    <property type="match status" value="1"/>
</dbReference>
<dbReference type="PANTHER" id="PTHR34653:SF1">
    <property type="entry name" value="FLAGELLAR HOOK-BASAL BODY COMPLEX PROTEIN FLIE"/>
    <property type="match status" value="1"/>
</dbReference>
<dbReference type="Pfam" id="PF02049">
    <property type="entry name" value="FliE"/>
    <property type="match status" value="1"/>
</dbReference>
<dbReference type="PRINTS" id="PR01006">
    <property type="entry name" value="FLGHOOKFLIE"/>
</dbReference>
<keyword id="KW-0975">Bacterial flagellum</keyword>
<keyword id="KW-1185">Reference proteome</keyword>
<protein>
    <recommendedName>
        <fullName evidence="1">Flagellar hook-basal body complex protein FliE</fullName>
    </recommendedName>
</protein>
<feature type="chain" id="PRO_1000045873" description="Flagellar hook-basal body complex protein FliE">
    <location>
        <begin position="1"/>
        <end position="121"/>
    </location>
</feature>
<reference key="1">
    <citation type="journal article" date="2008" name="PLoS Genet.">
        <title>Complete genome sequence of the complex carbohydrate-degrading marine bacterium, Saccharophagus degradans strain 2-40 T.</title>
        <authorList>
            <person name="Weiner R.M."/>
            <person name="Taylor L.E. II"/>
            <person name="Henrissat B."/>
            <person name="Hauser L."/>
            <person name="Land M."/>
            <person name="Coutinho P.M."/>
            <person name="Rancurel C."/>
            <person name="Saunders E.H."/>
            <person name="Longmire A.G."/>
            <person name="Zhang H."/>
            <person name="Bayer E.A."/>
            <person name="Gilbert H.J."/>
            <person name="Larimer F."/>
            <person name="Zhulin I.B."/>
            <person name="Ekborg N.A."/>
            <person name="Lamed R."/>
            <person name="Richardson P.M."/>
            <person name="Borovok I."/>
            <person name="Hutcheson S."/>
        </authorList>
    </citation>
    <scope>NUCLEOTIDE SEQUENCE [LARGE SCALE GENOMIC DNA]</scope>
    <source>
        <strain>2-40 / ATCC 43961 / DSM 17024</strain>
    </source>
</reference>
<proteinExistence type="inferred from homology"/>
<name>FLIE_SACD2</name>
<evidence type="ECO:0000255" key="1">
    <source>
        <dbReference type="HAMAP-Rule" id="MF_00724"/>
    </source>
</evidence>
<sequence length="121" mass="13150">MTDRVDINRVLMEIRSFKAQNQAMNSVQGVGNSLEGVNNTRGTQQVNGPRFGELLEQAVSKVNEVQQASGAMSQAYIQGDSNVGITDVMIASQKAGVAFDAMVQVRNKLVEAYKDVMNMPI</sequence>
<comment type="subcellular location">
    <subcellularLocation>
        <location evidence="1">Bacterial flagellum basal body</location>
    </subcellularLocation>
</comment>
<comment type="similarity">
    <text evidence="1">Belongs to the FliE family.</text>
</comment>